<proteinExistence type="evidence at protein level"/>
<accession>P63640</accession>
<accession>Q97NX2</accession>
<sequence>MDNRPIGFLDSGVGGLTVVRELMRQLPHEEIVYIGDSARAPYGPRPAEQIREYTWQLVNFLLTKDVKMIVIACNTATAVVWEEIKAQLDIPVLGVILPGASAAIKSSQGGKIGVIGTPMTVQSDIYRQKIHDLDPDLQVESLACPKFAPLVESGALSTSVTKKVVYETLRPLVGKVDSLILGCTHYPLLRPIIQNVMGPKVQLIDSGAECVRDISVLLNYFEINRGRDAGPLHHRFYTTASSQSFAQIGEEWLEKEIHVEHVEL</sequence>
<feature type="chain" id="PRO_0000095519" description="Glutamate racemase">
    <location>
        <begin position="1"/>
        <end position="264"/>
    </location>
</feature>
<feature type="active site" description="Proton donor/acceptor" evidence="1">
    <location>
        <position position="73"/>
    </location>
</feature>
<feature type="active site" description="Proton donor/acceptor" evidence="1">
    <location>
        <position position="183"/>
    </location>
</feature>
<feature type="binding site" evidence="1">
    <location>
        <begin position="10"/>
        <end position="11"/>
    </location>
    <ligand>
        <name>substrate</name>
    </ligand>
</feature>
<feature type="binding site" evidence="1">
    <location>
        <begin position="42"/>
        <end position="43"/>
    </location>
    <ligand>
        <name>substrate</name>
    </ligand>
</feature>
<feature type="binding site" evidence="1">
    <location>
        <begin position="74"/>
        <end position="75"/>
    </location>
    <ligand>
        <name>substrate</name>
    </ligand>
</feature>
<feature type="binding site" evidence="1">
    <location>
        <begin position="184"/>
        <end position="185"/>
    </location>
    <ligand>
        <name>substrate</name>
    </ligand>
</feature>
<name>MURI_STRPN</name>
<protein>
    <recommendedName>
        <fullName evidence="1">Glutamate racemase</fullName>
        <ecNumber evidence="1">5.1.1.3</ecNumber>
    </recommendedName>
</protein>
<keyword id="KW-0133">Cell shape</keyword>
<keyword id="KW-0961">Cell wall biogenesis/degradation</keyword>
<keyword id="KW-0413">Isomerase</keyword>
<keyword id="KW-0573">Peptidoglycan synthesis</keyword>
<keyword id="KW-1185">Reference proteome</keyword>
<dbReference type="EC" id="5.1.1.3" evidence="1"/>
<dbReference type="EMBL" id="AE005672">
    <property type="protein sequence ID" value="AAK75953.1"/>
    <property type="molecule type" value="Genomic_DNA"/>
</dbReference>
<dbReference type="PIR" id="H95219">
    <property type="entry name" value="H95219"/>
</dbReference>
<dbReference type="SMR" id="P63640"/>
<dbReference type="IntAct" id="P63640">
    <property type="interactions" value="1"/>
</dbReference>
<dbReference type="ChEMBL" id="CHEMBL3854"/>
<dbReference type="PaxDb" id="170187-SP_1881"/>
<dbReference type="EnsemblBacteria" id="AAK75953">
    <property type="protein sequence ID" value="AAK75953"/>
    <property type="gene ID" value="SP_1881"/>
</dbReference>
<dbReference type="KEGG" id="spn:SP_1881"/>
<dbReference type="eggNOG" id="COG0796">
    <property type="taxonomic scope" value="Bacteria"/>
</dbReference>
<dbReference type="PhylomeDB" id="P63640"/>
<dbReference type="BioCyc" id="SPNE170187:G1FZB-1911-MONOMER"/>
<dbReference type="UniPathway" id="UPA00219"/>
<dbReference type="Proteomes" id="UP000000585">
    <property type="component" value="Chromosome"/>
</dbReference>
<dbReference type="GO" id="GO:0008881">
    <property type="term" value="F:glutamate racemase activity"/>
    <property type="evidence" value="ECO:0007669"/>
    <property type="project" value="UniProtKB-UniRule"/>
</dbReference>
<dbReference type="GO" id="GO:0071555">
    <property type="term" value="P:cell wall organization"/>
    <property type="evidence" value="ECO:0007669"/>
    <property type="project" value="UniProtKB-KW"/>
</dbReference>
<dbReference type="GO" id="GO:0009252">
    <property type="term" value="P:peptidoglycan biosynthetic process"/>
    <property type="evidence" value="ECO:0007669"/>
    <property type="project" value="UniProtKB-UniRule"/>
</dbReference>
<dbReference type="GO" id="GO:0008360">
    <property type="term" value="P:regulation of cell shape"/>
    <property type="evidence" value="ECO:0007669"/>
    <property type="project" value="UniProtKB-KW"/>
</dbReference>
<dbReference type="FunFam" id="3.40.50.1860:FF:000002">
    <property type="entry name" value="Glutamate racemase"/>
    <property type="match status" value="1"/>
</dbReference>
<dbReference type="Gene3D" id="3.40.50.1860">
    <property type="match status" value="2"/>
</dbReference>
<dbReference type="HAMAP" id="MF_00258">
    <property type="entry name" value="Glu_racemase"/>
    <property type="match status" value="1"/>
</dbReference>
<dbReference type="InterPro" id="IPR015942">
    <property type="entry name" value="Asp/Glu/hydantoin_racemase"/>
</dbReference>
<dbReference type="InterPro" id="IPR001920">
    <property type="entry name" value="Asp/Glu_race"/>
</dbReference>
<dbReference type="InterPro" id="IPR018187">
    <property type="entry name" value="Asp/Glu_racemase_AS_1"/>
</dbReference>
<dbReference type="InterPro" id="IPR033134">
    <property type="entry name" value="Asp/Glu_racemase_AS_2"/>
</dbReference>
<dbReference type="InterPro" id="IPR004391">
    <property type="entry name" value="Glu_race"/>
</dbReference>
<dbReference type="NCBIfam" id="TIGR00067">
    <property type="entry name" value="glut_race"/>
    <property type="match status" value="1"/>
</dbReference>
<dbReference type="NCBIfam" id="NF002035">
    <property type="entry name" value="PRK00865.1-3"/>
    <property type="match status" value="1"/>
</dbReference>
<dbReference type="PANTHER" id="PTHR21198">
    <property type="entry name" value="GLUTAMATE RACEMASE"/>
    <property type="match status" value="1"/>
</dbReference>
<dbReference type="PANTHER" id="PTHR21198:SF2">
    <property type="entry name" value="GLUTAMATE RACEMASE"/>
    <property type="match status" value="1"/>
</dbReference>
<dbReference type="Pfam" id="PF01177">
    <property type="entry name" value="Asp_Glu_race"/>
    <property type="match status" value="1"/>
</dbReference>
<dbReference type="SUPFAM" id="SSF53681">
    <property type="entry name" value="Aspartate/glutamate racemase"/>
    <property type="match status" value="2"/>
</dbReference>
<dbReference type="PROSITE" id="PS00923">
    <property type="entry name" value="ASP_GLU_RACEMASE_1"/>
    <property type="match status" value="1"/>
</dbReference>
<dbReference type="PROSITE" id="PS00924">
    <property type="entry name" value="ASP_GLU_RACEMASE_2"/>
    <property type="match status" value="1"/>
</dbReference>
<gene>
    <name evidence="1" type="primary">murI</name>
    <name type="ordered locus">SP_1881</name>
</gene>
<organism>
    <name type="scientific">Streptococcus pneumoniae serotype 4 (strain ATCC BAA-334 / TIGR4)</name>
    <dbReference type="NCBI Taxonomy" id="170187"/>
    <lineage>
        <taxon>Bacteria</taxon>
        <taxon>Bacillati</taxon>
        <taxon>Bacillota</taxon>
        <taxon>Bacilli</taxon>
        <taxon>Lactobacillales</taxon>
        <taxon>Streptococcaceae</taxon>
        <taxon>Streptococcus</taxon>
    </lineage>
</organism>
<reference key="1">
    <citation type="journal article" date="2001" name="Science">
        <title>Complete genome sequence of a virulent isolate of Streptococcus pneumoniae.</title>
        <authorList>
            <person name="Tettelin H."/>
            <person name="Nelson K.E."/>
            <person name="Paulsen I.T."/>
            <person name="Eisen J.A."/>
            <person name="Read T.D."/>
            <person name="Peterson S.N."/>
            <person name="Heidelberg J.F."/>
            <person name="DeBoy R.T."/>
            <person name="Haft D.H."/>
            <person name="Dodson R.J."/>
            <person name="Durkin A.S."/>
            <person name="Gwinn M.L."/>
            <person name="Kolonay J.F."/>
            <person name="Nelson W.C."/>
            <person name="Peterson J.D."/>
            <person name="Umayam L.A."/>
            <person name="White O."/>
            <person name="Salzberg S.L."/>
            <person name="Lewis M.R."/>
            <person name="Radune D."/>
            <person name="Holtzapple E.K."/>
            <person name="Khouri H.M."/>
            <person name="Wolf A.M."/>
            <person name="Utterback T.R."/>
            <person name="Hansen C.L."/>
            <person name="McDonald L.A."/>
            <person name="Feldblyum T.V."/>
            <person name="Angiuoli S.V."/>
            <person name="Dickinson T."/>
            <person name="Hickey E.K."/>
            <person name="Holt I.E."/>
            <person name="Loftus B.J."/>
            <person name="Yang F."/>
            <person name="Smith H.O."/>
            <person name="Venter J.C."/>
            <person name="Dougherty B.A."/>
            <person name="Morrison D.A."/>
            <person name="Hollingshead S.K."/>
            <person name="Fraser C.M."/>
        </authorList>
    </citation>
    <scope>NUCLEOTIDE SEQUENCE [LARGE SCALE GENOMIC DNA]</scope>
    <source>
        <strain>ATCC BAA-334 / TIGR4</strain>
    </source>
</reference>
<evidence type="ECO:0000255" key="1">
    <source>
        <dbReference type="HAMAP-Rule" id="MF_00258"/>
    </source>
</evidence>
<comment type="function">
    <text evidence="1">Provides the (R)-glutamate required for cell wall biosynthesis.</text>
</comment>
<comment type="catalytic activity">
    <reaction evidence="1">
        <text>L-glutamate = D-glutamate</text>
        <dbReference type="Rhea" id="RHEA:12813"/>
        <dbReference type="ChEBI" id="CHEBI:29985"/>
        <dbReference type="ChEBI" id="CHEBI:29986"/>
        <dbReference type="EC" id="5.1.1.3"/>
    </reaction>
</comment>
<comment type="pathway">
    <text evidence="1">Cell wall biogenesis; peptidoglycan biosynthesis.</text>
</comment>
<comment type="interaction">
    <interactant intactId="EBI-11615993">
        <id>P63640</id>
    </interactant>
    <interactant intactId="EBI-3990226">
        <id>Q37995</id>
        <label>orf10</label>
    </interactant>
    <organismsDiffer>true</organismsDiffer>
    <experiments>2</experiments>
</comment>
<comment type="similarity">
    <text evidence="1">Belongs to the aspartate/glutamate racemases family.</text>
</comment>